<organism>
    <name type="scientific">Xenopus laevis</name>
    <name type="common">African clawed frog</name>
    <dbReference type="NCBI Taxonomy" id="8355"/>
    <lineage>
        <taxon>Eukaryota</taxon>
        <taxon>Metazoa</taxon>
        <taxon>Chordata</taxon>
        <taxon>Craniata</taxon>
        <taxon>Vertebrata</taxon>
        <taxon>Euteleostomi</taxon>
        <taxon>Amphibia</taxon>
        <taxon>Batrachia</taxon>
        <taxon>Anura</taxon>
        <taxon>Pipoidea</taxon>
        <taxon>Pipidae</taxon>
        <taxon>Xenopodinae</taxon>
        <taxon>Xenopus</taxon>
        <taxon>Xenopus</taxon>
    </lineage>
</organism>
<protein>
    <recommendedName>
        <fullName evidence="2">GPN-loop GTPase 2</fullName>
    </recommendedName>
    <alternativeName>
        <fullName evidence="2">ATP-binding domain 1 family member B</fullName>
    </alternativeName>
</protein>
<name>GPN2_XENLA</name>
<sequence>MADACSEMDRGAEKYPLLGFGQAVIGPPGSGKSTYVRAMQALLARMGRKSAIINLDPAGEDEPGAAVSLRELLGLEEVMSELRLGPNGSLLYCMEYLQENLDWLRARLQGLRGTYLLLDCPGQVELYTHHPALPDILRRLGGWGLRLCAVHLVDSHYCTDPAKFISVLCTSLSTMLHVELPHINVLSKMDLIEQYGRLAFNLDYYTEVMDLSFLVEQLTSDPFFRRHKRLHEKLAGVIEDYGLVTFMPLSIKDDKSLQLVLSAVDKASGFCFGEAKQSLGNLMSVAVGADFQFTSTLAFQEKYVENDGRTVEEETLDL</sequence>
<accession>Q66KF6</accession>
<accession>Q7ZYS2</accession>
<dbReference type="EMBL" id="BC041519">
    <property type="protein sequence ID" value="AAH41519.1"/>
    <property type="molecule type" value="mRNA"/>
</dbReference>
<dbReference type="EMBL" id="BC080422">
    <property type="protein sequence ID" value="AAH80422.1"/>
    <property type="molecule type" value="mRNA"/>
</dbReference>
<dbReference type="RefSeq" id="NP_001082424.1">
    <property type="nucleotide sequence ID" value="NM_001088955.1"/>
</dbReference>
<dbReference type="SMR" id="Q66KF6"/>
<dbReference type="BioGRID" id="99792">
    <property type="interactions" value="1"/>
</dbReference>
<dbReference type="IntAct" id="Q66KF6">
    <property type="interactions" value="1"/>
</dbReference>
<dbReference type="DNASU" id="398460"/>
<dbReference type="GeneID" id="398460"/>
<dbReference type="KEGG" id="xla:398460"/>
<dbReference type="AGR" id="Xenbase:XB-GENE-5751928"/>
<dbReference type="CTD" id="398460"/>
<dbReference type="Xenbase" id="XB-GENE-5751928">
    <property type="gene designation" value="gpn2.S"/>
</dbReference>
<dbReference type="OrthoDB" id="5839at2759"/>
<dbReference type="Proteomes" id="UP000186698">
    <property type="component" value="Chromosome 2S"/>
</dbReference>
<dbReference type="Bgee" id="398460">
    <property type="expression patterns" value="Expressed in egg cell and 19 other cell types or tissues"/>
</dbReference>
<dbReference type="GO" id="GO:0005737">
    <property type="term" value="C:cytoplasm"/>
    <property type="evidence" value="ECO:0007669"/>
    <property type="project" value="TreeGrafter"/>
</dbReference>
<dbReference type="GO" id="GO:0005525">
    <property type="term" value="F:GTP binding"/>
    <property type="evidence" value="ECO:0007669"/>
    <property type="project" value="UniProtKB-KW"/>
</dbReference>
<dbReference type="GO" id="GO:0003924">
    <property type="term" value="F:GTPase activity"/>
    <property type="evidence" value="ECO:0000318"/>
    <property type="project" value="GO_Central"/>
</dbReference>
<dbReference type="CDD" id="cd17871">
    <property type="entry name" value="GPN2"/>
    <property type="match status" value="1"/>
</dbReference>
<dbReference type="FunFam" id="3.40.50.300:FF:000338">
    <property type="entry name" value="GPN-loop GTPase 2"/>
    <property type="match status" value="1"/>
</dbReference>
<dbReference type="Gene3D" id="3.40.50.300">
    <property type="entry name" value="P-loop containing nucleotide triphosphate hydrolases"/>
    <property type="match status" value="1"/>
</dbReference>
<dbReference type="InterPro" id="IPR004130">
    <property type="entry name" value="Gpn"/>
</dbReference>
<dbReference type="InterPro" id="IPR030231">
    <property type="entry name" value="Gpn2"/>
</dbReference>
<dbReference type="InterPro" id="IPR027417">
    <property type="entry name" value="P-loop_NTPase"/>
</dbReference>
<dbReference type="PANTHER" id="PTHR21231:SF3">
    <property type="entry name" value="GPN-LOOP GTPASE 2"/>
    <property type="match status" value="1"/>
</dbReference>
<dbReference type="PANTHER" id="PTHR21231">
    <property type="entry name" value="XPA-BINDING PROTEIN 1-RELATED"/>
    <property type="match status" value="1"/>
</dbReference>
<dbReference type="Pfam" id="PF03029">
    <property type="entry name" value="ATP_bind_1"/>
    <property type="match status" value="1"/>
</dbReference>
<dbReference type="SUPFAM" id="SSF52540">
    <property type="entry name" value="P-loop containing nucleoside triphosphate hydrolases"/>
    <property type="match status" value="1"/>
</dbReference>
<gene>
    <name evidence="2" type="primary">gpn2</name>
    <name evidence="2" type="synonym">atpbd1b</name>
</gene>
<evidence type="ECO:0000250" key="1">
    <source>
        <dbReference type="UniProtKB" id="Q08726"/>
    </source>
</evidence>
<evidence type="ECO:0000250" key="2">
    <source>
        <dbReference type="UniProtKB" id="Q9H9Y4"/>
    </source>
</evidence>
<evidence type="ECO:0000250" key="3">
    <source>
        <dbReference type="UniProtKB" id="Q9UYR9"/>
    </source>
</evidence>
<evidence type="ECO:0000305" key="4"/>
<proteinExistence type="evidence at transcript level"/>
<reference key="1">
    <citation type="submission" date="2004-08" db="EMBL/GenBank/DDBJ databases">
        <authorList>
            <consortium name="NIH - Xenopus Gene Collection (XGC) project"/>
        </authorList>
    </citation>
    <scope>NUCLEOTIDE SEQUENCE [LARGE SCALE MRNA]</scope>
    <source>
        <tissue>Kidney</tissue>
    </source>
</reference>
<feature type="chain" id="PRO_0000247833" description="GPN-loop GTPase 2">
    <location>
        <begin position="1"/>
        <end position="318"/>
    </location>
</feature>
<feature type="short sequence motif" description="Gly-Pro-Asn (GPN)-loop; involved in dimer interface" evidence="3">
    <location>
        <begin position="85"/>
        <end position="87"/>
    </location>
</feature>
<feature type="binding site" evidence="3">
    <location>
        <begin position="29"/>
        <end position="34"/>
    </location>
    <ligand>
        <name>GTP</name>
        <dbReference type="ChEBI" id="CHEBI:37565"/>
    </ligand>
</feature>
<feature type="binding site" evidence="3">
    <location>
        <begin position="187"/>
        <end position="190"/>
    </location>
    <ligand>
        <name>GTP</name>
        <dbReference type="ChEBI" id="CHEBI:37565"/>
    </ligand>
</feature>
<feature type="site" description="Stabilizes the phosphate intermediate; shared with dimeric partner" evidence="3">
    <location>
        <position position="87"/>
    </location>
</feature>
<keyword id="KW-0342">GTP-binding</keyword>
<keyword id="KW-0378">Hydrolase</keyword>
<keyword id="KW-0547">Nucleotide-binding</keyword>
<keyword id="KW-1185">Reference proteome</keyword>
<comment type="function">
    <text evidence="1">Small GTPase required for proper localization of RNA polymerase II and III (RNAPII and RNAPIII). May act at an RNAP assembly step prior to nuclear import.</text>
</comment>
<comment type="subunit">
    <text evidence="1 2">Heterodimers with gpn1 or gpn3. Binds to RNA polymerase II (RNAPII).</text>
</comment>
<comment type="similarity">
    <text evidence="4">Belongs to the GPN-loop GTPase family.</text>
</comment>